<evidence type="ECO:0000255" key="1"/>
<evidence type="ECO:0000256" key="2">
    <source>
        <dbReference type="SAM" id="MobiDB-lite"/>
    </source>
</evidence>
<evidence type="ECO:0000305" key="3"/>
<feature type="chain" id="PRO_0000104057" description="Uncharacterized protein Mb2605">
    <location>
        <begin position="1"/>
        <end position="293"/>
    </location>
</feature>
<feature type="transmembrane region" description="Helical" evidence="1">
    <location>
        <begin position="25"/>
        <end position="45"/>
    </location>
</feature>
<feature type="region of interest" description="Disordered" evidence="2">
    <location>
        <begin position="1"/>
        <end position="22"/>
    </location>
</feature>
<feature type="region of interest" description="Disordered" evidence="2">
    <location>
        <begin position="243"/>
        <end position="265"/>
    </location>
</feature>
<feature type="compositionally biased region" description="Polar residues" evidence="2">
    <location>
        <begin position="248"/>
        <end position="265"/>
    </location>
</feature>
<gene>
    <name type="ordered locus">BQ2027_MB2605</name>
</gene>
<organism>
    <name type="scientific">Mycobacterium bovis (strain ATCC BAA-935 / AF2122/97)</name>
    <dbReference type="NCBI Taxonomy" id="233413"/>
    <lineage>
        <taxon>Bacteria</taxon>
        <taxon>Bacillati</taxon>
        <taxon>Actinomycetota</taxon>
        <taxon>Actinomycetes</taxon>
        <taxon>Mycobacteriales</taxon>
        <taxon>Mycobacteriaceae</taxon>
        <taxon>Mycobacterium</taxon>
        <taxon>Mycobacterium tuberculosis complex</taxon>
    </lineage>
</organism>
<keyword id="KW-0472">Membrane</keyword>
<keyword id="KW-1185">Reference proteome</keyword>
<keyword id="KW-0812">Transmembrane</keyword>
<keyword id="KW-1133">Transmembrane helix</keyword>
<dbReference type="EMBL" id="LT708304">
    <property type="protein sequence ID" value="SIU01223.1"/>
    <property type="molecule type" value="Genomic_DNA"/>
</dbReference>
<dbReference type="RefSeq" id="NP_856251.1">
    <property type="nucleotide sequence ID" value="NC_002945.3"/>
</dbReference>
<dbReference type="RefSeq" id="WP_003899384.1">
    <property type="nucleotide sequence ID" value="NC_002945.4"/>
</dbReference>
<dbReference type="KEGG" id="mbo:BQ2027_MB2605"/>
<dbReference type="PATRIC" id="fig|233413.5.peg.2864"/>
<dbReference type="Proteomes" id="UP000001419">
    <property type="component" value="Chromosome"/>
</dbReference>
<dbReference type="GO" id="GO:0016020">
    <property type="term" value="C:membrane"/>
    <property type="evidence" value="ECO:0007669"/>
    <property type="project" value="UniProtKB-SubCell"/>
</dbReference>
<dbReference type="InterPro" id="IPR007343">
    <property type="entry name" value="Uncharacterised_pept_Zn_put"/>
</dbReference>
<dbReference type="PANTHER" id="PTHR30168:SF0">
    <property type="entry name" value="INNER MEMBRANE PROTEIN"/>
    <property type="match status" value="1"/>
</dbReference>
<dbReference type="PANTHER" id="PTHR30168">
    <property type="entry name" value="PUTATIVE MEMBRANE PROTEIN YPFJ"/>
    <property type="match status" value="1"/>
</dbReference>
<dbReference type="Pfam" id="PF04228">
    <property type="entry name" value="Zn_peptidase"/>
    <property type="match status" value="1"/>
</dbReference>
<dbReference type="SUPFAM" id="SSF55486">
    <property type="entry name" value="Metalloproteases ('zincins'), catalytic domain"/>
    <property type="match status" value="1"/>
</dbReference>
<reference key="1">
    <citation type="journal article" date="2003" name="Proc. Natl. Acad. Sci. U.S.A.">
        <title>The complete genome sequence of Mycobacterium bovis.</title>
        <authorList>
            <person name="Garnier T."/>
            <person name="Eiglmeier K."/>
            <person name="Camus J.-C."/>
            <person name="Medina N."/>
            <person name="Mansoor H."/>
            <person name="Pryor M."/>
            <person name="Duthoy S."/>
            <person name="Grondin S."/>
            <person name="Lacroix C."/>
            <person name="Monsempe C."/>
            <person name="Simon S."/>
            <person name="Harris B."/>
            <person name="Atkin R."/>
            <person name="Doggett J."/>
            <person name="Mayes R."/>
            <person name="Keating L."/>
            <person name="Wheeler P.R."/>
            <person name="Parkhill J."/>
            <person name="Barrell B.G."/>
            <person name="Cole S.T."/>
            <person name="Gordon S.V."/>
            <person name="Hewinson R.G."/>
        </authorList>
    </citation>
    <scope>NUCLEOTIDE SEQUENCE [LARGE SCALE GENOMIC DNA]</scope>
    <source>
        <strain>ATCC BAA-935 / AF2122/97</strain>
    </source>
</reference>
<reference key="2">
    <citation type="journal article" date="2017" name="Genome Announc.">
        <title>Updated reference genome sequence and annotation of Mycobacterium bovis AF2122/97.</title>
        <authorList>
            <person name="Malone K.M."/>
            <person name="Farrell D."/>
            <person name="Stuber T.P."/>
            <person name="Schubert O.T."/>
            <person name="Aebersold R."/>
            <person name="Robbe-Austerman S."/>
            <person name="Gordon S.V."/>
        </authorList>
    </citation>
    <scope>NUCLEOTIDE SEQUENCE [LARGE SCALE GENOMIC DNA]</scope>
    <scope>GENOME REANNOTATION</scope>
    <source>
        <strain>ATCC BAA-935 / AF2122/97</strain>
    </source>
</reference>
<name>Y2605_MYCBO</name>
<sequence length="293" mass="30806">MTFNEGVQIDTSTTSTSGSGGGRRLAIGGGLGGLLVVVVAMLLGVDPGGVLSQQPLDTRDHVAPGFDLSQCRTGADANRFVQCRVVATGNSVDAVWKPLLPGYTRPHMRLFSGQVGTGCGPASSEVGPFYCPVDKTAYFDTDFFQVLVTQFGSSGGPFAEEYVVAHEYGHHVQNLLGVLGRAQQGAQGAAGSGVRTELQADCYAGVWAYYASTVKQESTGVPYLEPLSDKDIQDALAAAAAVGDDRIQQQTTGRTNPETWTHGSAAQRQKWFTVGYQTGDPNICDTFSAADLG</sequence>
<accession>P65020</accession>
<accession>A0A1R3Y1L3</accession>
<accession>Q50646</accession>
<accession>X2BL41</accession>
<proteinExistence type="predicted"/>
<protein>
    <recommendedName>
        <fullName>Uncharacterized protein Mb2605</fullName>
    </recommendedName>
</protein>
<comment type="subcellular location">
    <subcellularLocation>
        <location evidence="3">Membrane</location>
        <topology evidence="3">Single-pass membrane protein</topology>
    </subcellularLocation>
</comment>